<gene>
    <name type="primary">RIM20</name>
    <name type="ordered locus">YALI0D20130g</name>
</gene>
<sequence length="773" mass="87470">MPNIIWIPFRETQAVDLITGLGDTIEKQLNQPRDKFTADLKTANDLRNNILNPQPNASYLDHLTKYYAQLTYWTTKFPAGCDSLEFMWYGTLAYTANAAPVISQSLHFERCNLLYNLGSLYSQMGVNEGRQDADGLKMSFNYFQMAAGCFQILIENGLPDLESLNMRGLEYDTICCVRDLMLAQAQECFWQRSLLSGSRNSLVAKLAQQVSLLYDSALAWAQKSPQVRSEWVHHMTCKRQHFLAVAHYRMARDALDGCRYGEEIARLKAALNAIKEGTGKGMLRRYLVESVADDLNGIIDVVTEDLKRAEKDNNLIYLQSVPQTTALAPITPALMVKCTPPVELAKPIEFLTKDKLGLPLFVKLTPFAFHQALVLYSQECDKIVSSIESQLKNCTNSKNQALVEMALPGSLDSVEKPKGIPADIIAHSDQIKSERGLETTREAVKDVQRLAATARQELEAAKAVLDDERSEDEMLRRKNNSGWTRFDSKEAGAHLYTRLAELEQYLADAGASDKLVRGKLDEIDYLLSILNSGRSALENYLPSSVSGVRSPEVKRQVPHLRDLLNNLESLEIKRAQYMDRLSLKQQNDDIEPVLEYHMNKLIREKHANLRLTLADFEPITSKELEKYTVDQDWASEQKELQEEVLEKLDVANKDFRSSLDMNDAAIHRENAIQSLEVAYFSYQEQKDHLDAGRNFYNQLLGEISIFHKNCKQFVYERKMEGASLEHELSSMHLSEHEHSGGHSDTSSTPLAAPRAQRASNLSMWSPEDGIRFG</sequence>
<proteinExistence type="inferred from homology"/>
<accession>Q8WZL4</accession>
<accession>Q6C8F3</accession>
<evidence type="ECO:0000250" key="1"/>
<evidence type="ECO:0000255" key="2">
    <source>
        <dbReference type="PROSITE-ProRule" id="PRU00526"/>
    </source>
</evidence>
<evidence type="ECO:0000256" key="3">
    <source>
        <dbReference type="SAM" id="MobiDB-lite"/>
    </source>
</evidence>
<evidence type="ECO:0000269" key="4">
    <source>
    </source>
</evidence>
<evidence type="ECO:0000305" key="5"/>
<comment type="function">
    <text evidence="1 4">Required for the proteolytic cleavage of the transcription factor RIM101 in response to alkaline ambient pH. May act as a scaffold protein that recruits the calpain-like protease RIM13 via VPS32 to its substrate RIM101 (By similarity).</text>
</comment>
<comment type="subunit">
    <text evidence="1">Interacts with RIM101 by binding to its two YPX[LI] motifs.</text>
</comment>
<comment type="similarity">
    <text evidence="5">Belongs to the palA/RIM20 family.</text>
</comment>
<organism>
    <name type="scientific">Yarrowia lipolytica (strain CLIB 122 / E 150)</name>
    <name type="common">Yeast</name>
    <name type="synonym">Candida lipolytica</name>
    <dbReference type="NCBI Taxonomy" id="284591"/>
    <lineage>
        <taxon>Eukaryota</taxon>
        <taxon>Fungi</taxon>
        <taxon>Dikarya</taxon>
        <taxon>Ascomycota</taxon>
        <taxon>Saccharomycotina</taxon>
        <taxon>Dipodascomycetes</taxon>
        <taxon>Dipodascales</taxon>
        <taxon>Dipodascales incertae sedis</taxon>
        <taxon>Yarrowia</taxon>
    </lineage>
</organism>
<name>PALA_YARLI</name>
<dbReference type="EMBL" id="AJ319901">
    <property type="protein sequence ID" value="CAC86009.2"/>
    <property type="molecule type" value="Genomic_DNA"/>
</dbReference>
<dbReference type="EMBL" id="CR382130">
    <property type="protein sequence ID" value="CAG81251.1"/>
    <property type="molecule type" value="Genomic_DNA"/>
</dbReference>
<dbReference type="RefSeq" id="XP_503059.1">
    <property type="nucleotide sequence ID" value="XM_503059.1"/>
</dbReference>
<dbReference type="SMR" id="Q8WZL4"/>
<dbReference type="FunCoup" id="Q8WZL4">
    <property type="interactions" value="1223"/>
</dbReference>
<dbReference type="STRING" id="284591.Q8WZL4"/>
<dbReference type="EnsemblFungi" id="CAG81251">
    <property type="protein sequence ID" value="CAG81251"/>
    <property type="gene ID" value="YALI0_D20130g"/>
</dbReference>
<dbReference type="KEGG" id="yli:2910311"/>
<dbReference type="VEuPathDB" id="FungiDB:YALI0_D20130g"/>
<dbReference type="HOGENOM" id="CLU_007181_2_1_1"/>
<dbReference type="InParanoid" id="Q8WZL4"/>
<dbReference type="OMA" id="VSHAEEM"/>
<dbReference type="OrthoDB" id="99910at4891"/>
<dbReference type="Proteomes" id="UP000001300">
    <property type="component" value="Chromosome D"/>
</dbReference>
<dbReference type="GO" id="GO:0005768">
    <property type="term" value="C:endosome"/>
    <property type="evidence" value="ECO:0000318"/>
    <property type="project" value="GO_Central"/>
</dbReference>
<dbReference type="CDD" id="cd09241">
    <property type="entry name" value="BRO1_ScRim20-like"/>
    <property type="match status" value="1"/>
</dbReference>
<dbReference type="CDD" id="cd09236">
    <property type="entry name" value="V_AnPalA_UmRIM20_like"/>
    <property type="match status" value="1"/>
</dbReference>
<dbReference type="Gene3D" id="1.20.120.560">
    <property type="entry name" value="alix/aip1 in complex with the ypdl late domain"/>
    <property type="match status" value="1"/>
</dbReference>
<dbReference type="Gene3D" id="1.20.140.50">
    <property type="entry name" value="alix/aip1 like domains"/>
    <property type="match status" value="1"/>
</dbReference>
<dbReference type="Gene3D" id="1.25.40.280">
    <property type="entry name" value="alix/aip1 like domains"/>
    <property type="match status" value="1"/>
</dbReference>
<dbReference type="InterPro" id="IPR025304">
    <property type="entry name" value="ALIX_V_dom"/>
</dbReference>
<dbReference type="InterPro" id="IPR004328">
    <property type="entry name" value="BRO1_dom"/>
</dbReference>
<dbReference type="InterPro" id="IPR038499">
    <property type="entry name" value="BRO1_sf"/>
</dbReference>
<dbReference type="PANTHER" id="PTHR23030">
    <property type="entry name" value="PCD6 INTERACTING PROTEIN-RELATED"/>
    <property type="match status" value="1"/>
</dbReference>
<dbReference type="PANTHER" id="PTHR23030:SF39">
    <property type="entry name" value="PROGRAMMED CELL DEATH 6-INTERACTING PROTEIN"/>
    <property type="match status" value="1"/>
</dbReference>
<dbReference type="Pfam" id="PF13949">
    <property type="entry name" value="ALIX_LYPXL_bnd"/>
    <property type="match status" value="1"/>
</dbReference>
<dbReference type="Pfam" id="PF03097">
    <property type="entry name" value="BRO1"/>
    <property type="match status" value="1"/>
</dbReference>
<dbReference type="SMART" id="SM01041">
    <property type="entry name" value="BRO1"/>
    <property type="match status" value="1"/>
</dbReference>
<dbReference type="PROSITE" id="PS51180">
    <property type="entry name" value="BRO1"/>
    <property type="match status" value="1"/>
</dbReference>
<reference key="1">
    <citation type="journal article" date="2002" name="Genetics">
        <title>Genetic control of extracellular protease synthesis in the yeast Yarrowia lipolytica.</title>
        <authorList>
            <person name="Gonzalez-Lopez C.I."/>
            <person name="Szabo R."/>
            <person name="Blanchin-Roland S."/>
            <person name="Gaillardin C."/>
        </authorList>
    </citation>
    <scope>NUCLEOTIDE SEQUENCE [GENOMIC DNA]</scope>
    <scope>FUNCTION</scope>
    <source>
        <strain>SY12</strain>
    </source>
</reference>
<reference key="2">
    <citation type="journal article" date="2004" name="Nature">
        <title>Genome evolution in yeasts.</title>
        <authorList>
            <person name="Dujon B."/>
            <person name="Sherman D."/>
            <person name="Fischer G."/>
            <person name="Durrens P."/>
            <person name="Casaregola S."/>
            <person name="Lafontaine I."/>
            <person name="de Montigny J."/>
            <person name="Marck C."/>
            <person name="Neuveglise C."/>
            <person name="Talla E."/>
            <person name="Goffard N."/>
            <person name="Frangeul L."/>
            <person name="Aigle M."/>
            <person name="Anthouard V."/>
            <person name="Babour A."/>
            <person name="Barbe V."/>
            <person name="Barnay S."/>
            <person name="Blanchin S."/>
            <person name="Beckerich J.-M."/>
            <person name="Beyne E."/>
            <person name="Bleykasten C."/>
            <person name="Boisrame A."/>
            <person name="Boyer J."/>
            <person name="Cattolico L."/>
            <person name="Confanioleri F."/>
            <person name="de Daruvar A."/>
            <person name="Despons L."/>
            <person name="Fabre E."/>
            <person name="Fairhead C."/>
            <person name="Ferry-Dumazet H."/>
            <person name="Groppi A."/>
            <person name="Hantraye F."/>
            <person name="Hennequin C."/>
            <person name="Jauniaux N."/>
            <person name="Joyet P."/>
            <person name="Kachouri R."/>
            <person name="Kerrest A."/>
            <person name="Koszul R."/>
            <person name="Lemaire M."/>
            <person name="Lesur I."/>
            <person name="Ma L."/>
            <person name="Muller H."/>
            <person name="Nicaud J.-M."/>
            <person name="Nikolski M."/>
            <person name="Oztas S."/>
            <person name="Ozier-Kalogeropoulos O."/>
            <person name="Pellenz S."/>
            <person name="Potier S."/>
            <person name="Richard G.-F."/>
            <person name="Straub M.-L."/>
            <person name="Suleau A."/>
            <person name="Swennen D."/>
            <person name="Tekaia F."/>
            <person name="Wesolowski-Louvel M."/>
            <person name="Westhof E."/>
            <person name="Wirth B."/>
            <person name="Zeniou-Meyer M."/>
            <person name="Zivanovic Y."/>
            <person name="Bolotin-Fukuhara M."/>
            <person name="Thierry A."/>
            <person name="Bouchier C."/>
            <person name="Caudron B."/>
            <person name="Scarpelli C."/>
            <person name="Gaillardin C."/>
            <person name="Weissenbach J."/>
            <person name="Wincker P."/>
            <person name="Souciet J.-L."/>
        </authorList>
    </citation>
    <scope>NUCLEOTIDE SEQUENCE [LARGE SCALE GENOMIC DNA]</scope>
    <source>
        <strain>CLIB 122 / E 150</strain>
    </source>
</reference>
<feature type="chain" id="PRO_0000218884" description="pH-response regulator protein RIM20">
    <location>
        <begin position="1"/>
        <end position="773"/>
    </location>
</feature>
<feature type="domain" description="BRO1" evidence="2">
    <location>
        <begin position="3"/>
        <end position="398"/>
    </location>
</feature>
<feature type="region of interest" description="Disordered" evidence="3">
    <location>
        <begin position="726"/>
        <end position="758"/>
    </location>
</feature>
<feature type="compositionally biased region" description="Basic and acidic residues" evidence="3">
    <location>
        <begin position="726"/>
        <end position="741"/>
    </location>
</feature>
<protein>
    <recommendedName>
        <fullName>pH-response regulator protein RIM20</fullName>
    </recommendedName>
</protein>
<keyword id="KW-1185">Reference proteome</keyword>